<gene>
    <name evidence="12 18" type="primary">Fto</name>
    <name evidence="13" type="synonym">Kiaa1752</name>
</gene>
<evidence type="ECO:0000250" key="1">
    <source>
        <dbReference type="UniProtKB" id="Q9C0B1"/>
    </source>
</evidence>
<evidence type="ECO:0000269" key="2">
    <source>
    </source>
</evidence>
<evidence type="ECO:0000269" key="3">
    <source>
    </source>
</evidence>
<evidence type="ECO:0000269" key="4">
    <source>
    </source>
</evidence>
<evidence type="ECO:0000269" key="5">
    <source>
    </source>
</evidence>
<evidence type="ECO:0000269" key="6">
    <source>
    </source>
</evidence>
<evidence type="ECO:0000269" key="7">
    <source>
    </source>
</evidence>
<evidence type="ECO:0000269" key="8">
    <source>
    </source>
</evidence>
<evidence type="ECO:0000269" key="9">
    <source>
    </source>
</evidence>
<evidence type="ECO:0000269" key="10">
    <source>
    </source>
</evidence>
<evidence type="ECO:0000269" key="11">
    <source>
    </source>
</evidence>
<evidence type="ECO:0000303" key="12">
    <source>
    </source>
</evidence>
<evidence type="ECO:0000303" key="13">
    <source>
    </source>
</evidence>
<evidence type="ECO:0000303" key="14">
    <source>
    </source>
</evidence>
<evidence type="ECO:0000303" key="15">
    <source>
    </source>
</evidence>
<evidence type="ECO:0000305" key="16"/>
<evidence type="ECO:0000305" key="17">
    <source>
    </source>
</evidence>
<evidence type="ECO:0000312" key="18">
    <source>
        <dbReference type="MGI" id="MGI:1347093"/>
    </source>
</evidence>
<organism>
    <name type="scientific">Mus musculus</name>
    <name type="common">Mouse</name>
    <dbReference type="NCBI Taxonomy" id="10090"/>
    <lineage>
        <taxon>Eukaryota</taxon>
        <taxon>Metazoa</taxon>
        <taxon>Chordata</taxon>
        <taxon>Craniata</taxon>
        <taxon>Vertebrata</taxon>
        <taxon>Euteleostomi</taxon>
        <taxon>Mammalia</taxon>
        <taxon>Eutheria</taxon>
        <taxon>Euarchontoglires</taxon>
        <taxon>Glires</taxon>
        <taxon>Rodentia</taxon>
        <taxon>Myomorpha</taxon>
        <taxon>Muroidea</taxon>
        <taxon>Muridae</taxon>
        <taxon>Murinae</taxon>
        <taxon>Mus</taxon>
        <taxon>Mus</taxon>
    </lineage>
</organism>
<dbReference type="EC" id="1.14.11.-" evidence="1"/>
<dbReference type="EC" id="1.14.11.53" evidence="17"/>
<dbReference type="EMBL" id="AJ237917">
    <property type="protein sequence ID" value="CAB59324.1"/>
    <property type="molecule type" value="mRNA"/>
</dbReference>
<dbReference type="EMBL" id="AK129437">
    <property type="protein sequence ID" value="BAC98247.1"/>
    <property type="status" value="ALT_INIT"/>
    <property type="molecule type" value="mRNA"/>
</dbReference>
<dbReference type="EMBL" id="AK036677">
    <property type="protein sequence ID" value="BAC29533.1"/>
    <property type="molecule type" value="mRNA"/>
</dbReference>
<dbReference type="EMBL" id="AK040866">
    <property type="protein sequence ID" value="BAC30724.1"/>
    <property type="molecule type" value="mRNA"/>
</dbReference>
<dbReference type="EMBL" id="AK045465">
    <property type="protein sequence ID" value="BAC32382.1"/>
    <property type="molecule type" value="mRNA"/>
</dbReference>
<dbReference type="EMBL" id="AK049502">
    <property type="protein sequence ID" value="BAC33780.1"/>
    <property type="molecule type" value="mRNA"/>
</dbReference>
<dbReference type="EMBL" id="AK088881">
    <property type="protein sequence ID" value="BAC40629.1"/>
    <property type="molecule type" value="mRNA"/>
</dbReference>
<dbReference type="EMBL" id="AK161060">
    <property type="protein sequence ID" value="BAE36177.1"/>
    <property type="molecule type" value="mRNA"/>
</dbReference>
<dbReference type="EMBL" id="BC022222">
    <property type="protein sequence ID" value="AAH22222.1"/>
    <property type="molecule type" value="mRNA"/>
</dbReference>
<dbReference type="EMBL" id="BC057008">
    <property type="protein sequence ID" value="AAH57008.1"/>
    <property type="molecule type" value="mRNA"/>
</dbReference>
<dbReference type="CCDS" id="CCDS22521.1">
    <molecule id="Q8BGW1-1"/>
</dbReference>
<dbReference type="RefSeq" id="NP_036066.2">
    <molecule id="Q8BGW1-1"/>
    <property type="nucleotide sequence ID" value="NM_011936.2"/>
</dbReference>
<dbReference type="SMR" id="Q8BGW1"/>
<dbReference type="BioGRID" id="204941">
    <property type="interactions" value="21"/>
</dbReference>
<dbReference type="FunCoup" id="Q8BGW1">
    <property type="interactions" value="4329"/>
</dbReference>
<dbReference type="STRING" id="10090.ENSMUSP00000068380"/>
<dbReference type="ChEMBL" id="CHEMBL3611964"/>
<dbReference type="GlyGen" id="Q8BGW1">
    <property type="glycosylation" value="2 sites, 1 N-linked glycan (1 site), 1 O-linked glycan (1 site)"/>
</dbReference>
<dbReference type="iPTMnet" id="Q8BGW1"/>
<dbReference type="PhosphoSitePlus" id="Q8BGW1"/>
<dbReference type="SwissPalm" id="Q8BGW1"/>
<dbReference type="jPOST" id="Q8BGW1"/>
<dbReference type="PaxDb" id="10090-ENSMUSP00000068380"/>
<dbReference type="PeptideAtlas" id="Q8BGW1"/>
<dbReference type="ProteomicsDB" id="266879">
    <molecule id="Q8BGW1-1"/>
</dbReference>
<dbReference type="ProteomicsDB" id="266880">
    <molecule id="Q8BGW1-2"/>
</dbReference>
<dbReference type="ProteomicsDB" id="266881">
    <molecule id="Q8BGW1-3"/>
</dbReference>
<dbReference type="ProteomicsDB" id="266882">
    <molecule id="Q8BGW1-4"/>
</dbReference>
<dbReference type="Pumba" id="Q8BGW1"/>
<dbReference type="Antibodypedia" id="28448">
    <property type="antibodies" value="461 antibodies from 43 providers"/>
</dbReference>
<dbReference type="DNASU" id="26383"/>
<dbReference type="Ensembl" id="ENSMUST00000069718.15">
    <molecule id="Q8BGW1-1"/>
    <property type="protein sequence ID" value="ENSMUSP00000068380.8"/>
    <property type="gene ID" value="ENSMUSG00000055932.16"/>
</dbReference>
<dbReference type="Ensembl" id="ENSMUST00000125471.8">
    <molecule id="Q8BGW1-4"/>
    <property type="protein sequence ID" value="ENSMUSP00000147563.2"/>
    <property type="gene ID" value="ENSMUSG00000055932.16"/>
</dbReference>
<dbReference type="Ensembl" id="ENSMUST00000128081.8">
    <molecule id="Q8BGW1-2"/>
    <property type="protein sequence ID" value="ENSMUSP00000147548.2"/>
    <property type="gene ID" value="ENSMUSG00000055932.16"/>
</dbReference>
<dbReference type="Ensembl" id="ENSMUST00000136802.8">
    <molecule id="Q8BGW1-3"/>
    <property type="protein sequence ID" value="ENSMUSP00000147603.2"/>
    <property type="gene ID" value="ENSMUSG00000055932.16"/>
</dbReference>
<dbReference type="GeneID" id="26383"/>
<dbReference type="KEGG" id="mmu:26383"/>
<dbReference type="UCSC" id="uc009msq.2">
    <molecule id="Q8BGW1-4"/>
    <property type="organism name" value="mouse"/>
</dbReference>
<dbReference type="UCSC" id="uc009msr.2">
    <molecule id="Q8BGW1-3"/>
    <property type="organism name" value="mouse"/>
</dbReference>
<dbReference type="UCSC" id="uc009mss.2">
    <molecule id="Q8BGW1-2"/>
    <property type="organism name" value="mouse"/>
</dbReference>
<dbReference type="UCSC" id="uc009mst.2">
    <molecule id="Q8BGW1-1"/>
    <property type="organism name" value="mouse"/>
</dbReference>
<dbReference type="AGR" id="MGI:1347093"/>
<dbReference type="CTD" id="79068"/>
<dbReference type="MGI" id="MGI:1347093">
    <property type="gene designation" value="Fto"/>
</dbReference>
<dbReference type="VEuPathDB" id="HostDB:ENSMUSG00000055932"/>
<dbReference type="eggNOG" id="ENOG502QR31">
    <property type="taxonomic scope" value="Eukaryota"/>
</dbReference>
<dbReference type="GeneTree" id="ENSGT00390000017730"/>
<dbReference type="HOGENOM" id="CLU_041676_0_0_1"/>
<dbReference type="InParanoid" id="Q8BGW1"/>
<dbReference type="OMA" id="NYSCEGS"/>
<dbReference type="OrthoDB" id="46257at2759"/>
<dbReference type="PhylomeDB" id="Q8BGW1"/>
<dbReference type="TreeFam" id="TF333296"/>
<dbReference type="BRENDA" id="1.14.11.53">
    <property type="organism ID" value="3474"/>
</dbReference>
<dbReference type="Reactome" id="R-MMU-73943">
    <property type="pathway name" value="Reversal of alkylation damage by DNA dioxygenases"/>
</dbReference>
<dbReference type="BioGRID-ORCS" id="26383">
    <property type="hits" value="6 hits in 114 CRISPR screens"/>
</dbReference>
<dbReference type="ChiTaRS" id="Fto">
    <property type="organism name" value="mouse"/>
</dbReference>
<dbReference type="PRO" id="PR:Q8BGW1"/>
<dbReference type="Proteomes" id="UP000000589">
    <property type="component" value="Chromosome 8"/>
</dbReference>
<dbReference type="RNAct" id="Q8BGW1">
    <property type="molecule type" value="protein"/>
</dbReference>
<dbReference type="Bgee" id="ENSMUSG00000055932">
    <property type="expression patterns" value="Expressed in undifferentiated genital tubercle and 251 other cell types or tissues"/>
</dbReference>
<dbReference type="ExpressionAtlas" id="Q8BGW1">
    <property type="expression patterns" value="baseline and differential"/>
</dbReference>
<dbReference type="GO" id="GO:0005737">
    <property type="term" value="C:cytoplasm"/>
    <property type="evidence" value="ECO:0000250"/>
    <property type="project" value="UniProtKB"/>
</dbReference>
<dbReference type="GO" id="GO:0005829">
    <property type="term" value="C:cytosol"/>
    <property type="evidence" value="ECO:0007669"/>
    <property type="project" value="Ensembl"/>
</dbReference>
<dbReference type="GO" id="GO:0016607">
    <property type="term" value="C:nuclear speck"/>
    <property type="evidence" value="ECO:0000250"/>
    <property type="project" value="UniProtKB"/>
</dbReference>
<dbReference type="GO" id="GO:0005634">
    <property type="term" value="C:nucleus"/>
    <property type="evidence" value="ECO:0000314"/>
    <property type="project" value="UniProtKB"/>
</dbReference>
<dbReference type="GO" id="GO:0016706">
    <property type="term" value="F:2-oxoglutarate-dependent dioxygenase activity"/>
    <property type="evidence" value="ECO:0000314"/>
    <property type="project" value="UniProtKB"/>
</dbReference>
<dbReference type="GO" id="GO:0035516">
    <property type="term" value="F:broad specificity oxidative DNA demethylase activity"/>
    <property type="evidence" value="ECO:0000314"/>
    <property type="project" value="BHF-UCL"/>
</dbReference>
<dbReference type="GO" id="GO:0008198">
    <property type="term" value="F:ferrous iron binding"/>
    <property type="evidence" value="ECO:0000250"/>
    <property type="project" value="UniProtKB"/>
</dbReference>
<dbReference type="GO" id="GO:1990931">
    <property type="term" value="F:mRNA N6-methyladenosine dioxygenase activity"/>
    <property type="evidence" value="ECO:0000250"/>
    <property type="project" value="UniProtKB"/>
</dbReference>
<dbReference type="GO" id="GO:0035515">
    <property type="term" value="F:oxidative RNA demethylase activity"/>
    <property type="evidence" value="ECO:0000314"/>
    <property type="project" value="BHF-UCL"/>
</dbReference>
<dbReference type="GO" id="GO:1990984">
    <property type="term" value="F:tRNA demethylase activity"/>
    <property type="evidence" value="ECO:0000250"/>
    <property type="project" value="UniProtKB"/>
</dbReference>
<dbReference type="GO" id="GO:0060612">
    <property type="term" value="P:adipose tissue development"/>
    <property type="evidence" value="ECO:0000315"/>
    <property type="project" value="UniProtKB"/>
</dbReference>
<dbReference type="GO" id="GO:0006307">
    <property type="term" value="P:DNA alkylation repair"/>
    <property type="evidence" value="ECO:0000314"/>
    <property type="project" value="BHF-UCL"/>
</dbReference>
<dbReference type="GO" id="GO:0061157">
    <property type="term" value="P:mRNA destabilization"/>
    <property type="evidence" value="ECO:0000250"/>
    <property type="project" value="UniProtKB"/>
</dbReference>
<dbReference type="GO" id="GO:0090335">
    <property type="term" value="P:regulation of brown fat cell differentiation"/>
    <property type="evidence" value="ECO:0007669"/>
    <property type="project" value="Ensembl"/>
</dbReference>
<dbReference type="GO" id="GO:0010883">
    <property type="term" value="P:regulation of lipid storage"/>
    <property type="evidence" value="ECO:0000315"/>
    <property type="project" value="UniProtKB"/>
</dbReference>
<dbReference type="GO" id="GO:0040014">
    <property type="term" value="P:regulation of multicellular organism growth"/>
    <property type="evidence" value="ECO:0000315"/>
    <property type="project" value="UniProtKB"/>
</dbReference>
<dbReference type="GO" id="GO:0044065">
    <property type="term" value="P:regulation of respiratory system process"/>
    <property type="evidence" value="ECO:0000315"/>
    <property type="project" value="UniProtKB"/>
</dbReference>
<dbReference type="GO" id="GO:0070350">
    <property type="term" value="P:regulation of white fat cell proliferation"/>
    <property type="evidence" value="ECO:0000315"/>
    <property type="project" value="UniProtKB"/>
</dbReference>
<dbReference type="GO" id="GO:0042245">
    <property type="term" value="P:RNA repair"/>
    <property type="evidence" value="ECO:0000314"/>
    <property type="project" value="BHF-UCL"/>
</dbReference>
<dbReference type="GO" id="GO:0016180">
    <property type="term" value="P:snRNA processing"/>
    <property type="evidence" value="ECO:0007669"/>
    <property type="project" value="Ensembl"/>
</dbReference>
<dbReference type="GO" id="GO:0001659">
    <property type="term" value="P:temperature homeostasis"/>
    <property type="evidence" value="ECO:0000315"/>
    <property type="project" value="UniProtKB"/>
</dbReference>
<dbReference type="FunFam" id="1.20.58.1470:FF:000001">
    <property type="entry name" value="FTO, alpha-ketoglutarate dependent dioxygenase"/>
    <property type="match status" value="1"/>
</dbReference>
<dbReference type="FunFam" id="2.60.120.590:FF:000001">
    <property type="entry name" value="FTO, alpha-ketoglutarate dependent dioxygenase"/>
    <property type="match status" value="1"/>
</dbReference>
<dbReference type="Gene3D" id="2.60.120.590">
    <property type="entry name" value="Alpha-ketoglutarate-dependent dioxygenase AlkB-like"/>
    <property type="match status" value="1"/>
</dbReference>
<dbReference type="Gene3D" id="1.20.58.1470">
    <property type="entry name" value="FTO C-terminal domain"/>
    <property type="match status" value="1"/>
</dbReference>
<dbReference type="InterPro" id="IPR037151">
    <property type="entry name" value="AlkB-like_sf"/>
</dbReference>
<dbReference type="InterPro" id="IPR032868">
    <property type="entry name" value="FTO"/>
</dbReference>
<dbReference type="InterPro" id="IPR024366">
    <property type="entry name" value="FTO_C"/>
</dbReference>
<dbReference type="InterPro" id="IPR038413">
    <property type="entry name" value="FTO_C_sf"/>
</dbReference>
<dbReference type="InterPro" id="IPR024367">
    <property type="entry name" value="FTO_cat_dom"/>
</dbReference>
<dbReference type="PANTHER" id="PTHR31291">
    <property type="entry name" value="ALPHA-KETOGLUTARATE-DEPENDENT DIOXYGENASE FTO"/>
    <property type="match status" value="1"/>
</dbReference>
<dbReference type="PANTHER" id="PTHR31291:SF2">
    <property type="entry name" value="ALPHA-KETOGLUTARATE-DEPENDENT DIOXYGENASE FTO"/>
    <property type="match status" value="1"/>
</dbReference>
<dbReference type="Pfam" id="PF12934">
    <property type="entry name" value="FTO_CTD"/>
    <property type="match status" value="1"/>
</dbReference>
<dbReference type="Pfam" id="PF12933">
    <property type="entry name" value="FTO_NTD"/>
    <property type="match status" value="1"/>
</dbReference>
<dbReference type="SMART" id="SM01223">
    <property type="entry name" value="FTO_NTD"/>
    <property type="match status" value="1"/>
</dbReference>
<reference key="1">
    <citation type="journal article" date="1999" name="Mamm. Genome">
        <title>Cloning of Fatso (Fto), a novel gene deleted by the Fused toes (Ft) mouse mutation.</title>
        <authorList>
            <person name="Peters T."/>
            <person name="Ausmeier K."/>
            <person name="Ruether U."/>
        </authorList>
    </citation>
    <scope>NUCLEOTIDE SEQUENCE [MRNA] (ISOFORM 1)</scope>
</reference>
<reference key="2">
    <citation type="journal article" date="2003" name="DNA Res.">
        <title>Prediction of the coding sequences of mouse homologues of KIAA gene: III. The complete nucleotide sequences of 500 mouse KIAA-homologous cDNAs identified by screening of terminal sequences of cDNA clones randomly sampled from size-fractionated libraries.</title>
        <authorList>
            <person name="Okazaki N."/>
            <person name="Kikuno R."/>
            <person name="Ohara R."/>
            <person name="Inamoto S."/>
            <person name="Koseki H."/>
            <person name="Hiraoka S."/>
            <person name="Saga Y."/>
            <person name="Nagase T."/>
            <person name="Ohara O."/>
            <person name="Koga H."/>
        </authorList>
    </citation>
    <scope>NUCLEOTIDE SEQUENCE [LARGE SCALE MRNA] (ISOFORM 2)</scope>
    <source>
        <tissue>Brain</tissue>
    </source>
</reference>
<reference key="3">
    <citation type="journal article" date="2005" name="Science">
        <title>The transcriptional landscape of the mammalian genome.</title>
        <authorList>
            <person name="Carninci P."/>
            <person name="Kasukawa T."/>
            <person name="Katayama S."/>
            <person name="Gough J."/>
            <person name="Frith M.C."/>
            <person name="Maeda N."/>
            <person name="Oyama R."/>
            <person name="Ravasi T."/>
            <person name="Lenhard B."/>
            <person name="Wells C."/>
            <person name="Kodzius R."/>
            <person name="Shimokawa K."/>
            <person name="Bajic V.B."/>
            <person name="Brenner S.E."/>
            <person name="Batalov S."/>
            <person name="Forrest A.R."/>
            <person name="Zavolan M."/>
            <person name="Davis M.J."/>
            <person name="Wilming L.G."/>
            <person name="Aidinis V."/>
            <person name="Allen J.E."/>
            <person name="Ambesi-Impiombato A."/>
            <person name="Apweiler R."/>
            <person name="Aturaliya R.N."/>
            <person name="Bailey T.L."/>
            <person name="Bansal M."/>
            <person name="Baxter L."/>
            <person name="Beisel K.W."/>
            <person name="Bersano T."/>
            <person name="Bono H."/>
            <person name="Chalk A.M."/>
            <person name="Chiu K.P."/>
            <person name="Choudhary V."/>
            <person name="Christoffels A."/>
            <person name="Clutterbuck D.R."/>
            <person name="Crowe M.L."/>
            <person name="Dalla E."/>
            <person name="Dalrymple B.P."/>
            <person name="de Bono B."/>
            <person name="Della Gatta G."/>
            <person name="di Bernardo D."/>
            <person name="Down T."/>
            <person name="Engstrom P."/>
            <person name="Fagiolini M."/>
            <person name="Faulkner G."/>
            <person name="Fletcher C.F."/>
            <person name="Fukushima T."/>
            <person name="Furuno M."/>
            <person name="Futaki S."/>
            <person name="Gariboldi M."/>
            <person name="Georgii-Hemming P."/>
            <person name="Gingeras T.R."/>
            <person name="Gojobori T."/>
            <person name="Green R.E."/>
            <person name="Gustincich S."/>
            <person name="Harbers M."/>
            <person name="Hayashi Y."/>
            <person name="Hensch T.K."/>
            <person name="Hirokawa N."/>
            <person name="Hill D."/>
            <person name="Huminiecki L."/>
            <person name="Iacono M."/>
            <person name="Ikeo K."/>
            <person name="Iwama A."/>
            <person name="Ishikawa T."/>
            <person name="Jakt M."/>
            <person name="Kanapin A."/>
            <person name="Katoh M."/>
            <person name="Kawasawa Y."/>
            <person name="Kelso J."/>
            <person name="Kitamura H."/>
            <person name="Kitano H."/>
            <person name="Kollias G."/>
            <person name="Krishnan S.P."/>
            <person name="Kruger A."/>
            <person name="Kummerfeld S.K."/>
            <person name="Kurochkin I.V."/>
            <person name="Lareau L.F."/>
            <person name="Lazarevic D."/>
            <person name="Lipovich L."/>
            <person name="Liu J."/>
            <person name="Liuni S."/>
            <person name="McWilliam S."/>
            <person name="Madan Babu M."/>
            <person name="Madera M."/>
            <person name="Marchionni L."/>
            <person name="Matsuda H."/>
            <person name="Matsuzawa S."/>
            <person name="Miki H."/>
            <person name="Mignone F."/>
            <person name="Miyake S."/>
            <person name="Morris K."/>
            <person name="Mottagui-Tabar S."/>
            <person name="Mulder N."/>
            <person name="Nakano N."/>
            <person name="Nakauchi H."/>
            <person name="Ng P."/>
            <person name="Nilsson R."/>
            <person name="Nishiguchi S."/>
            <person name="Nishikawa S."/>
            <person name="Nori F."/>
            <person name="Ohara O."/>
            <person name="Okazaki Y."/>
            <person name="Orlando V."/>
            <person name="Pang K.C."/>
            <person name="Pavan W.J."/>
            <person name="Pavesi G."/>
            <person name="Pesole G."/>
            <person name="Petrovsky N."/>
            <person name="Piazza S."/>
            <person name="Reed J."/>
            <person name="Reid J.F."/>
            <person name="Ring B.Z."/>
            <person name="Ringwald M."/>
            <person name="Rost B."/>
            <person name="Ruan Y."/>
            <person name="Salzberg S.L."/>
            <person name="Sandelin A."/>
            <person name="Schneider C."/>
            <person name="Schoenbach C."/>
            <person name="Sekiguchi K."/>
            <person name="Semple C.A."/>
            <person name="Seno S."/>
            <person name="Sessa L."/>
            <person name="Sheng Y."/>
            <person name="Shibata Y."/>
            <person name="Shimada H."/>
            <person name="Shimada K."/>
            <person name="Silva D."/>
            <person name="Sinclair B."/>
            <person name="Sperling S."/>
            <person name="Stupka E."/>
            <person name="Sugiura K."/>
            <person name="Sultana R."/>
            <person name="Takenaka Y."/>
            <person name="Taki K."/>
            <person name="Tammoja K."/>
            <person name="Tan S.L."/>
            <person name="Tang S."/>
            <person name="Taylor M.S."/>
            <person name="Tegner J."/>
            <person name="Teichmann S.A."/>
            <person name="Ueda H.R."/>
            <person name="van Nimwegen E."/>
            <person name="Verardo R."/>
            <person name="Wei C.L."/>
            <person name="Yagi K."/>
            <person name="Yamanishi H."/>
            <person name="Zabarovsky E."/>
            <person name="Zhu S."/>
            <person name="Zimmer A."/>
            <person name="Hide W."/>
            <person name="Bult C."/>
            <person name="Grimmond S.M."/>
            <person name="Teasdale R.D."/>
            <person name="Liu E.T."/>
            <person name="Brusic V."/>
            <person name="Quackenbush J."/>
            <person name="Wahlestedt C."/>
            <person name="Mattick J.S."/>
            <person name="Hume D.A."/>
            <person name="Kai C."/>
            <person name="Sasaki D."/>
            <person name="Tomaru Y."/>
            <person name="Fukuda S."/>
            <person name="Kanamori-Katayama M."/>
            <person name="Suzuki M."/>
            <person name="Aoki J."/>
            <person name="Arakawa T."/>
            <person name="Iida J."/>
            <person name="Imamura K."/>
            <person name="Itoh M."/>
            <person name="Kato T."/>
            <person name="Kawaji H."/>
            <person name="Kawagashira N."/>
            <person name="Kawashima T."/>
            <person name="Kojima M."/>
            <person name="Kondo S."/>
            <person name="Konno H."/>
            <person name="Nakano K."/>
            <person name="Ninomiya N."/>
            <person name="Nishio T."/>
            <person name="Okada M."/>
            <person name="Plessy C."/>
            <person name="Shibata K."/>
            <person name="Shiraki T."/>
            <person name="Suzuki S."/>
            <person name="Tagami M."/>
            <person name="Waki K."/>
            <person name="Watahiki A."/>
            <person name="Okamura-Oho Y."/>
            <person name="Suzuki H."/>
            <person name="Kawai J."/>
            <person name="Hayashizaki Y."/>
        </authorList>
    </citation>
    <scope>NUCLEOTIDE SEQUENCE [LARGE SCALE MRNA] (ISOFORMS 1; 3 AND 4)</scope>
    <source>
        <strain>C57BL/6J</strain>
        <strain>NOD</strain>
        <tissue>Aorta</tissue>
        <tissue>Bone</tissue>
        <tissue>Corpora quadrigemina</tissue>
        <tissue>Skin</tissue>
        <tissue>Thymus</tissue>
        <tissue>Vein</tissue>
    </source>
</reference>
<reference key="4">
    <citation type="journal article" date="2004" name="Genome Res.">
        <title>The status, quality, and expansion of the NIH full-length cDNA project: the Mammalian Gene Collection (MGC).</title>
        <authorList>
            <consortium name="The MGC Project Team"/>
        </authorList>
    </citation>
    <scope>NUCLEOTIDE SEQUENCE [LARGE SCALE MRNA] (ISOFORM 1)</scope>
    <source>
        <strain>C57BL/6J</strain>
        <strain>FVB/N</strain>
        <tissue>Brain</tissue>
        <tissue>Kidney</tissue>
    </source>
</reference>
<reference key="5">
    <citation type="journal article" date="2007" name="Science">
        <title>The obesity-associated FTO gene encodes a 2-oxoglutarate-dependent nucleic acid demethylase.</title>
        <authorList>
            <person name="Gerken T."/>
            <person name="Girard C.A."/>
            <person name="Tung Y.C."/>
            <person name="Webby C.J."/>
            <person name="Saudek V."/>
            <person name="Hewitson K.S."/>
            <person name="Yeo G.S."/>
            <person name="McDonough M.A."/>
            <person name="Cunliffe S."/>
            <person name="McNeill L.A."/>
            <person name="Galvanovskis J."/>
            <person name="Rorsman P."/>
            <person name="Robins P."/>
            <person name="Prieur X."/>
            <person name="Coll A.P."/>
            <person name="Ma M."/>
            <person name="Jovanovic Z."/>
            <person name="Farooqi I.S."/>
            <person name="Sedgwick B."/>
            <person name="Barroso I."/>
            <person name="Lindahl T."/>
            <person name="Ponting C.P."/>
            <person name="Ashcroft F.M."/>
            <person name="O'Rahilly S."/>
            <person name="Schofield C.J."/>
        </authorList>
    </citation>
    <scope>FUNCTION</scope>
    <scope>COFACTOR</scope>
    <scope>ACTIVITY REGULATION</scope>
    <scope>SUBCELLULAR LOCATION</scope>
    <scope>MUTAGENESIS OF HIS-304 AND ARG-313</scope>
    <scope>INDUCTION</scope>
    <scope>TISSUE SPECIFICITY</scope>
</reference>
<reference key="6">
    <citation type="journal article" date="2008" name="FEBS Lett.">
        <title>Oxidative demethylation of 3-methylthymine and 3-methyluracil in single-stranded DNA and RNA by mouse and human FTO.</title>
        <authorList>
            <person name="Jia G."/>
            <person name="Yang C.G."/>
            <person name="Yang S."/>
            <person name="Jian X."/>
            <person name="Yi C."/>
            <person name="Zhou Z."/>
            <person name="He C."/>
        </authorList>
    </citation>
    <scope>FUNCTION</scope>
    <scope>BIOPHYSICOCHEMICAL PROPERTIES</scope>
</reference>
<reference key="7">
    <citation type="journal article" date="2009" name="Nature">
        <title>Inactivation of the Fto gene protects from obesity.</title>
        <authorList>
            <person name="Fischer J."/>
            <person name="Koch L."/>
            <person name="Emmerling C."/>
            <person name="Vierkotten J."/>
            <person name="Peters T."/>
            <person name="Bruning J.C."/>
            <person name="Ruther U."/>
        </authorList>
    </citation>
    <scope>DISRUPTION PHENOTYPE</scope>
    <scope>SUBCELLULAR LOCATION</scope>
    <scope>FUNCTION</scope>
    <scope>TISSUE SPECIFICITY</scope>
</reference>
<reference key="8">
    <citation type="journal article" date="2009" name="PLoS Genet.">
        <title>A mouse model for the metabolic effects of the human fat mass and obesity associated FTO gene.</title>
        <authorList>
            <person name="Church C."/>
            <person name="Lee S."/>
            <person name="Bagg E.A."/>
            <person name="McTaggart J.S."/>
            <person name="Deacon R."/>
            <person name="Gerken T."/>
            <person name="Lee A."/>
            <person name="Moir L."/>
            <person name="Mecinovic J."/>
            <person name="Quwailid M.M."/>
            <person name="Schofield C.J."/>
            <person name="Ashcroft F.M."/>
            <person name="Cox R.D."/>
        </authorList>
    </citation>
    <scope>FUNCTION</scope>
    <scope>SUBCELLULAR LOCATION</scope>
    <scope>SUBUNIT</scope>
    <scope>CIRCULAR DICHROISM</scope>
    <scope>MUTAGENESIS OF ILE-367</scope>
</reference>
<reference key="9">
    <citation type="journal article" date="2010" name="Cell">
        <title>A tissue-specific atlas of mouse protein phosphorylation and expression.</title>
        <authorList>
            <person name="Huttlin E.L."/>
            <person name="Jedrychowski M.P."/>
            <person name="Elias J.E."/>
            <person name="Goswami T."/>
            <person name="Rad R."/>
            <person name="Beausoleil S.A."/>
            <person name="Villen J."/>
            <person name="Haas W."/>
            <person name="Sowa M.E."/>
            <person name="Gygi S.P."/>
        </authorList>
    </citation>
    <scope>IDENTIFICATION BY MASS SPECTROMETRY [LARGE SCALE ANALYSIS]</scope>
    <source>
        <tissue>Brain</tissue>
        <tissue>Lung</tissue>
        <tissue>Spleen</tissue>
        <tissue>Testis</tissue>
    </source>
</reference>
<reference key="10">
    <citation type="journal article" date="2010" name="Nat. Genet.">
        <title>Overexpression of Fto leads to increased food intake and results in obesity.</title>
        <authorList>
            <person name="Church C."/>
            <person name="Moir L."/>
            <person name="McMurray F."/>
            <person name="Girard C."/>
            <person name="Banks G.T."/>
            <person name="Teboul L."/>
            <person name="Wells S."/>
            <person name="Bruening J.C."/>
            <person name="Nolan P.M."/>
            <person name="Ashcroft F.M."/>
            <person name="Cox R.D."/>
        </authorList>
    </citation>
    <scope>FUNCTION</scope>
</reference>
<reference key="11">
    <citation type="journal article" date="2014" name="Cell Metab.">
        <title>Hypomorphism for RPGRIP1L, a ciliary gene vicinal to the FTO locus, causes increased adiposity in mice.</title>
        <authorList>
            <person name="Stratigopoulos G."/>
            <person name="Martin Carli J.F."/>
            <person name="O'Day D.R."/>
            <person name="Wang L."/>
            <person name="Leduc C.A."/>
            <person name="Lanzano P."/>
            <person name="Chung W.K."/>
            <person name="Rosenbaum M."/>
            <person name="Egli D."/>
            <person name="Doherty D.A."/>
            <person name="Leibel R.L."/>
        </authorList>
    </citation>
    <scope>CAUTION</scope>
</reference>
<reference key="12">
    <citation type="journal article" date="2014" name="Nature">
        <title>Obesity-associated variants within FTO form long-range functional connections with IRX3.</title>
        <authorList>
            <person name="Smemo S."/>
            <person name="Tena J.J."/>
            <person name="Kim K.H."/>
            <person name="Gamazon E.R."/>
            <person name="Sakabe N.J."/>
            <person name="Gomez-Marin C."/>
            <person name="Aneas I."/>
            <person name="Credidio F.L."/>
            <person name="Sobreira D.R."/>
            <person name="Wasserman N.F."/>
            <person name="Lee J.H."/>
            <person name="Puviindran V."/>
            <person name="Tam D."/>
            <person name="Shen M."/>
            <person name="Son J.E."/>
            <person name="Vakili N.A."/>
            <person name="Sung H.K."/>
            <person name="Naranjo S."/>
            <person name="Acemel R.D."/>
            <person name="Manzanares M."/>
            <person name="Nagy A."/>
            <person name="Cox N.J."/>
            <person name="Hui C.C."/>
            <person name="Gomez-Skarmeta J.L."/>
            <person name="Nobrega M.A."/>
        </authorList>
    </citation>
    <scope>CAUTION</scope>
</reference>
<reference key="13">
    <citation type="journal article" date="2013" name="Nat. Neurosci.">
        <title>The fat mass and obesity associated gene (Fto) regulates activity of the dopaminergic midbrain circuitry.</title>
        <authorList>
            <person name="Hess M.E."/>
            <person name="Hess S."/>
            <person name="Meyer K.D."/>
            <person name="Verhagen L.A."/>
            <person name="Koch L."/>
            <person name="Broenneke H.S."/>
            <person name="Dietrich M.O."/>
            <person name="Jordan S.D."/>
            <person name="Saletore Y."/>
            <person name="Elemento O."/>
            <person name="Belgardt B.F."/>
            <person name="Franz T."/>
            <person name="Horvath T.L."/>
            <person name="Ruether U."/>
            <person name="Jaffrey S.R."/>
            <person name="Kloppenburg P."/>
            <person name="Bruening J.C."/>
        </authorList>
    </citation>
    <scope>FUNCTION</scope>
    <scope>DISRUPTION PHENOTYPE</scope>
</reference>
<reference key="14">
    <citation type="journal article" date="2013" name="PLoS Genet.">
        <title>Adult onset global loss of the fto gene alters body composition and metabolism in the mouse.</title>
        <authorList>
            <person name="McMurray F."/>
            <person name="Church C.D."/>
            <person name="Larder R."/>
            <person name="Nicholson G."/>
            <person name="Wells S."/>
            <person name="Teboul L."/>
            <person name="Tung Y.C."/>
            <person name="Rimmington D."/>
            <person name="Bosch F."/>
            <person name="Jimenez V."/>
            <person name="Yeo G.S."/>
            <person name="O'Rahilly S."/>
            <person name="Ashcroft F.M."/>
            <person name="Coll A.P."/>
            <person name="Cox R.D."/>
        </authorList>
    </citation>
    <scope>FUNCTION</scope>
    <scope>DISRUPTION PHENOTYPE</scope>
</reference>
<reference key="15">
    <citation type="journal article" date="2017" name="Nature">
        <title>Reversible methylation of m6Am in the 5' cap controls mRNA stability.</title>
        <authorList>
            <person name="Mauer J."/>
            <person name="Luo X."/>
            <person name="Blanjoie A."/>
            <person name="Jiao X."/>
            <person name="Grozhik A.V."/>
            <person name="Patil D.P."/>
            <person name="Linder B."/>
            <person name="Pickering B.F."/>
            <person name="Vasseur J.J."/>
            <person name="Chen Q."/>
            <person name="Gross S.S."/>
            <person name="Elemento O."/>
            <person name="Debart F."/>
            <person name="Kiledjian M."/>
            <person name="Jaffrey S.R."/>
        </authorList>
    </citation>
    <scope>FUNCTION</scope>
    <scope>DISRUPTION PHENOTYPE</scope>
</reference>
<name>FTO_MOUSE</name>
<accession>Q8BGW1</accession>
<accession>Q3TTZ5</accession>
<accession>Q6ZPI7</accession>
<accession>Q8BR68</accession>
<accession>Q8CB66</accession>
<accession>Q8R250</accession>
<accession>Q9QZ13</accession>
<proteinExistence type="evidence at protein level"/>
<feature type="chain" id="PRO_0000286164" description="Alpha-ketoglutarate-dependent dioxygenase FTO">
    <location>
        <begin position="1"/>
        <end position="502"/>
    </location>
</feature>
<feature type="region of interest" description="Fe2OG dioxygenase domain" evidence="1">
    <location>
        <begin position="32"/>
        <end position="324"/>
    </location>
</feature>
<feature type="region of interest" description="Loop L1; predicted to block binding of double-stranded DNA or RNA" evidence="1">
    <location>
        <begin position="210"/>
        <end position="221"/>
    </location>
</feature>
<feature type="binding site" evidence="1">
    <location>
        <position position="96"/>
    </location>
    <ligand>
        <name>substrate</name>
    </ligand>
</feature>
<feature type="binding site" evidence="1">
    <location>
        <position position="108"/>
    </location>
    <ligand>
        <name>substrate</name>
    </ligand>
</feature>
<feature type="binding site" evidence="1">
    <location>
        <position position="202"/>
    </location>
    <ligand>
        <name>2-oxoglutarate</name>
        <dbReference type="ChEBI" id="CHEBI:16810"/>
    </ligand>
</feature>
<feature type="binding site" evidence="1">
    <location>
        <begin position="228"/>
        <end position="231"/>
    </location>
    <ligand>
        <name>substrate</name>
    </ligand>
</feature>
<feature type="binding site" evidence="1">
    <location>
        <position position="228"/>
    </location>
    <ligand>
        <name>Fe cation</name>
        <dbReference type="ChEBI" id="CHEBI:24875"/>
        <note>catalytic</note>
    </ligand>
</feature>
<feature type="binding site" evidence="1">
    <location>
        <position position="230"/>
    </location>
    <ligand>
        <name>Fe cation</name>
        <dbReference type="ChEBI" id="CHEBI:24875"/>
        <note>catalytic</note>
    </ligand>
</feature>
<feature type="binding site" evidence="1">
    <location>
        <position position="292"/>
    </location>
    <ligand>
        <name>2-oxoglutarate</name>
        <dbReference type="ChEBI" id="CHEBI:16810"/>
    </ligand>
</feature>
<feature type="binding site" evidence="1">
    <location>
        <position position="304"/>
    </location>
    <ligand>
        <name>Fe cation</name>
        <dbReference type="ChEBI" id="CHEBI:24875"/>
        <note>catalytic</note>
    </ligand>
</feature>
<feature type="binding site" evidence="1">
    <location>
        <begin position="313"/>
        <end position="315"/>
    </location>
    <ligand>
        <name>2-oxoglutarate</name>
        <dbReference type="ChEBI" id="CHEBI:16810"/>
    </ligand>
</feature>
<feature type="binding site" evidence="1">
    <location>
        <position position="317"/>
    </location>
    <ligand>
        <name>2-oxoglutarate</name>
        <dbReference type="ChEBI" id="CHEBI:16810"/>
    </ligand>
</feature>
<feature type="binding site" evidence="1">
    <location>
        <position position="319"/>
    </location>
    <ligand>
        <name>2-oxoglutarate</name>
        <dbReference type="ChEBI" id="CHEBI:16810"/>
    </ligand>
</feature>
<feature type="modified residue" description="N6-acetyllysine" evidence="1">
    <location>
        <position position="213"/>
    </location>
</feature>
<feature type="splice variant" id="VSP_025007" description="In isoform 4." evidence="14">
    <original>DDLNATHQHCVLAGSQPRFSS</original>
    <variation>GNVGSLRVGHLWGFEIHFWIL</variation>
    <location>
        <begin position="296"/>
        <end position="316"/>
    </location>
</feature>
<feature type="splice variant" id="VSP_025008" description="In isoform 4." evidence="14">
    <location>
        <begin position="317"/>
        <end position="502"/>
    </location>
</feature>
<feature type="splice variant" id="VSP_025009" description="In isoform 3." evidence="14">
    <original>TNA</original>
    <variation>VSA</variation>
    <location>
        <begin position="411"/>
        <end position="413"/>
    </location>
</feature>
<feature type="splice variant" id="VSP_025010" description="In isoform 3." evidence="14">
    <location>
        <begin position="414"/>
        <end position="502"/>
    </location>
</feature>
<feature type="splice variant" id="VSP_025011" description="In isoform 2." evidence="13">
    <original>CQSRVVRTLPVQQKPDCRPYWEKDDPSMPLPFDLTDVVSELRGQLLEARS</original>
    <variation>FVLLRGGVWCPCPSSARPAQRTKVEDILS</variation>
    <location>
        <begin position="453"/>
        <end position="502"/>
    </location>
</feature>
<feature type="mutagenesis site" description="Reduced enzyme activity." evidence="2">
    <original>H</original>
    <variation>A</variation>
    <location>
        <position position="304"/>
    </location>
</feature>
<feature type="mutagenesis site" description="Loss of enzyme activity." evidence="2">
    <original>R</original>
    <variation>A</variation>
    <location>
        <position position="313"/>
    </location>
</feature>
<feature type="mutagenesis site" description="Reduces enzyme activity by about 60%." evidence="5">
    <original>I</original>
    <variation>A</variation>
    <location>
        <position position="367"/>
    </location>
</feature>
<feature type="mutagenesis site" description="Alters protein structure and causes an increase in whole body metabolism, leading to a lean phenotype in adult males, but not in females." evidence="5">
    <original>I</original>
    <variation>F</variation>
    <location>
        <position position="367"/>
    </location>
</feature>
<feature type="sequence conflict" description="In Ref. 3; BAC32382." evidence="16" ref="3">
    <original>G</original>
    <variation>R</variation>
    <location>
        <position position="181"/>
    </location>
</feature>
<feature type="sequence conflict" description="In Ref. 1; CAB59324, 2; BAC98247, 3; BAC40629 and 4; AAH22222." evidence="16" ref="1 2 3 4">
    <original>N</original>
    <variation>S</variation>
    <location>
        <position position="384"/>
    </location>
</feature>
<feature type="sequence conflict" description="In Ref. 2; BAC98247, 3; BAC40629 and 4; AAH22222." evidence="16" ref="2 3 4">
    <original>M</original>
    <variation>V</variation>
    <location>
        <position position="410"/>
    </location>
</feature>
<feature type="sequence conflict" description="In Ref. 3; BAC40629 and 4; AAH22222." evidence="16" ref="3 4">
    <original>V</original>
    <variation>A</variation>
    <location>
        <position position="463"/>
    </location>
</feature>
<sequence length="502" mass="58007">MKRVQTAEEREREAKKLRLLEELEDTWLPYLTPKDDEFYQQWQLKYPKLVFREAGSIPEELHKEVPEAFLTLHKHGCLFRDVVRIQGKDVLTPVSRILIGDPGCTYKYLNTRLFTVPWPVKGCTVKYTEAEIAAACQTFLKLNDYLQVETIQALEELAVREKANEDAVPLCMAEFPRAGVGPSCDDEVDLKSRAAYNVTLLNFMDPQKMPYLKEEPYFGMGKMAVSWHHDENLVDRSAVAVYSYSCEGSEDESEDESSFEGRDPDTWHVGFKISWDIETPGLTIPLHQGDCYFMLDDLNATHQHCVLAGSQPRFSSTHRVAECSTGTLDYILERCQLALQNVLNDSDDGDVSLKSFDPAVLKQGEEIHNEVEFEWLRQFWFQGNRYKLCTDWWCEPMTHLEGLWKKMESMTNAVLREVKREGLPVEQRSEILSAILVPLTVRQNLRKEWHARCQSRVVRTLPVQQKPDCRPYWEKDDPSMPLPFDLTDVVSELRGQLLEARS</sequence>
<protein>
    <recommendedName>
        <fullName evidence="16">Alpha-ketoglutarate-dependent dioxygenase FTO</fullName>
    </recommendedName>
    <alternativeName>
        <fullName evidence="15">Fat mass and obesity-associated protein</fullName>
    </alternativeName>
    <alternativeName>
        <fullName evidence="12">Protein fatso</fullName>
    </alternativeName>
    <alternativeName>
        <fullName evidence="16">U6 small nuclear RNA (2'-O-methyladenosine-N(6)-)-demethylase FTO</fullName>
        <ecNumber evidence="1">1.14.11.-</ecNumber>
    </alternativeName>
    <alternativeName>
        <fullName evidence="16">U6 small nuclear RNA N(6)-methyladenosine-demethylase FTO</fullName>
        <ecNumber evidence="1">1.14.11.-</ecNumber>
    </alternativeName>
    <alternativeName>
        <fullName evidence="16">mRNA (2'-O-methyladenosine-N(6)-)-demethylase FTO</fullName>
        <shortName evidence="16">m6A(m)-demethylase FTO</shortName>
        <ecNumber evidence="1">1.14.11.-</ecNumber>
    </alternativeName>
    <alternativeName>
        <fullName evidence="16">mRNA N(6)-methyladenosine demethylase FTO</fullName>
        <ecNumber evidence="17">1.14.11.53</ecNumber>
    </alternativeName>
    <alternativeName>
        <fullName evidence="16">tRNA N1-methyl adenine demethylase FTO</fullName>
        <ecNumber evidence="1">1.14.11.-</ecNumber>
    </alternativeName>
</protein>
<comment type="function">
    <text evidence="1 2 3 4 5 6 7 8 11">RNA demethylase that mediates oxidative demethylation of different RNA species, such as mRNAs, tRNAs and snRNAs, and acts as a regulator of fat mass, adipogenesis and energy homeostasis (PubMed:17991826, PubMed:18775698, PubMed:28002401). Specifically demethylates N(6)-methyladenosine (m6A) RNA, the most prevalent internal modification of messenger RNA (mRNA) in higher eukaryotes (PubMed:28002401). M6A demethylation by FTO affects mRNA expression and stability (By similarity). Also able to demethylate m6A in U6 small nuclear RNA (snRNA) (By similarity). Mediates demethylation of N(6),2'-O-dimethyladenosine cap (m6A(m)), by demethylating the N(6)-methyladenosine at the second transcribed position of mRNAs and U6 snRNA (PubMed:28002401). Demethylation of m6A(m) in the 5'-cap by FTO affects mRNA stability by promoting susceptibility to decapping (By similarity). Also acts as a tRNA demethylase by removing N(1)-methyladenine from various tRNAs (By similarity). Has no activity towards 1-methylguanine (By similarity). Has no detectable activity towards double-stranded DNA (By similarity). Also able to repair alkylated DNA and RNA by oxidative demethylation: demethylates single-stranded RNA containing 3-methyluracil, single-stranded DNA containing 3-methylthymine and has low demethylase activity towards single-stranded DNA containing 1-methyladenine or 3-methylcytosine (PubMed:17991826, PubMed:18775698). Ability to repair alkylated DNA and RNA is however unsure in vivo (PubMed:17991826, PubMed:18775698). Involved in the regulation of fat mass, adipogenesis and body weight, thereby contributing to the regulation of body size and body fat accumulation (PubMed:19234441, PubMed:19680540, PubMed:21076408, PubMed:23300482, PubMed:23817550). Involved in the regulation of thermogenesis and the control of adipocyte differentiation into brown or white fat cells (PubMed:19234441, PubMed:19680540). Regulates activity of the dopaminergic midbrain circuitry via its ability to demethylate m6A in mRNAs (PubMed:23817550).</text>
</comment>
<comment type="catalytic activity">
    <reaction evidence="1">
        <text>a 5'-end (N(7)-methyl 5'-triphosphoguanosine)-(N(6),2'-O-dimethyladenosine) in mRNA + 2-oxoglutarate + O2 = a 5'-end (N(7)-methyl 5'-triphosphoguanosine)-(2'-O-methyladenosine) in mRNA + formaldehyde + succinate + CO2</text>
        <dbReference type="Rhea" id="RHEA:57896"/>
        <dbReference type="Rhea" id="RHEA-COMP:11518"/>
        <dbReference type="Rhea" id="RHEA-COMP:11519"/>
        <dbReference type="ChEBI" id="CHEBI:15379"/>
        <dbReference type="ChEBI" id="CHEBI:16526"/>
        <dbReference type="ChEBI" id="CHEBI:16810"/>
        <dbReference type="ChEBI" id="CHEBI:16842"/>
        <dbReference type="ChEBI" id="CHEBI:30031"/>
        <dbReference type="ChEBI" id="CHEBI:85958"/>
        <dbReference type="ChEBI" id="CHEBI:85959"/>
    </reaction>
</comment>
<comment type="catalytic activity">
    <reaction evidence="17">
        <text>an N(6)-methyladenosine in mRNA + 2-oxoglutarate + O2 = an adenosine in mRNA + formaldehyde + succinate + CO2</text>
        <dbReference type="Rhea" id="RHEA:49520"/>
        <dbReference type="Rhea" id="RHEA-COMP:12414"/>
        <dbReference type="Rhea" id="RHEA-COMP:12417"/>
        <dbReference type="ChEBI" id="CHEBI:15379"/>
        <dbReference type="ChEBI" id="CHEBI:16526"/>
        <dbReference type="ChEBI" id="CHEBI:16810"/>
        <dbReference type="ChEBI" id="CHEBI:16842"/>
        <dbReference type="ChEBI" id="CHEBI:30031"/>
        <dbReference type="ChEBI" id="CHEBI:74411"/>
        <dbReference type="ChEBI" id="CHEBI:74449"/>
        <dbReference type="EC" id="1.14.11.53"/>
    </reaction>
</comment>
<comment type="catalytic activity">
    <reaction evidence="1">
        <text>N(6)-methyladenosine in U6 snRNA + 2-oxoglutarate + O2 = adenosine in U6 snRNA + formaldehyde + succinate + CO2</text>
        <dbReference type="Rhea" id="RHEA:57900"/>
        <dbReference type="Rhea" id="RHEA-COMP:13573"/>
        <dbReference type="Rhea" id="RHEA-COMP:13574"/>
        <dbReference type="ChEBI" id="CHEBI:15379"/>
        <dbReference type="ChEBI" id="CHEBI:16526"/>
        <dbReference type="ChEBI" id="CHEBI:16810"/>
        <dbReference type="ChEBI" id="CHEBI:16842"/>
        <dbReference type="ChEBI" id="CHEBI:30031"/>
        <dbReference type="ChEBI" id="CHEBI:74411"/>
        <dbReference type="ChEBI" id="CHEBI:74449"/>
    </reaction>
</comment>
<comment type="catalytic activity">
    <reaction evidence="1">
        <text>a 5'-end (N(7)-methyl 5'-triphosphoguanosine)-(N(6),2'-O-dimethyladenosine) in U6 snRNA + 2-oxoglutarate + O2 = a 5'-end (N(7)-methyl 5'-triphosphoguanosine)-(2'-O-methyladenosine) in U6 snRNA + formaldehyde + succinate + CO2</text>
        <dbReference type="Rhea" id="RHEA:57904"/>
        <dbReference type="Rhea" id="RHEA-COMP:15030"/>
        <dbReference type="Rhea" id="RHEA-COMP:15031"/>
        <dbReference type="ChEBI" id="CHEBI:15379"/>
        <dbReference type="ChEBI" id="CHEBI:16526"/>
        <dbReference type="ChEBI" id="CHEBI:16810"/>
        <dbReference type="ChEBI" id="CHEBI:16842"/>
        <dbReference type="ChEBI" id="CHEBI:30031"/>
        <dbReference type="ChEBI" id="CHEBI:85958"/>
        <dbReference type="ChEBI" id="CHEBI:85959"/>
    </reaction>
</comment>
<comment type="catalytic activity">
    <reaction evidence="1">
        <text>an N(1)-methyladenosine in tRNA + 2-oxoglutarate + O2 = an adenosine in tRNA + formaldehyde + succinate + CO2</text>
        <dbReference type="Rhea" id="RHEA:54576"/>
        <dbReference type="Rhea" id="RHEA-COMP:10242"/>
        <dbReference type="Rhea" id="RHEA-COMP:12312"/>
        <dbReference type="ChEBI" id="CHEBI:15379"/>
        <dbReference type="ChEBI" id="CHEBI:16526"/>
        <dbReference type="ChEBI" id="CHEBI:16810"/>
        <dbReference type="ChEBI" id="CHEBI:16842"/>
        <dbReference type="ChEBI" id="CHEBI:30031"/>
        <dbReference type="ChEBI" id="CHEBI:74411"/>
        <dbReference type="ChEBI" id="CHEBI:74491"/>
    </reaction>
</comment>
<comment type="cofactor">
    <cofactor evidence="2">
        <name>Fe(2+)</name>
        <dbReference type="ChEBI" id="CHEBI:29033"/>
    </cofactor>
    <text evidence="2">Binds 1 Fe(2+) ion per subunit.</text>
</comment>
<comment type="activity regulation">
    <text evidence="2">Activated by ascorbate (PubMed:17991826). Inhibited by N-oxalylglycine, fumarate and succinate (PubMed:17991826).</text>
</comment>
<comment type="biophysicochemical properties">
    <phDependence>
        <text evidence="3">Optimum pH is 5.5-6.</text>
    </phDependence>
</comment>
<comment type="subunit">
    <text evidence="5">Monomer (PubMed:19680540). May also exist as homodimer (PubMed:19680540).</text>
</comment>
<comment type="subcellular location">
    <subcellularLocation>
        <location evidence="2 4 5">Nucleus</location>
    </subcellularLocation>
    <subcellularLocation>
        <location evidence="1">Nucleus speckle</location>
    </subcellularLocation>
    <subcellularLocation>
        <location evidence="1">Cytoplasm</location>
    </subcellularLocation>
    <text evidence="1">Localizes mainly in the nucleus, where it is able to demethylate N(6)-methyladenosine (m6A) and N(6),2'-O-dimethyladenosine cap (m6A(m)) in U6 small nuclear RNA (snRNA), N(1)-methyladenine from tRNAs and internal m6A in mRNAs. In the cytoplasm, mediates demethylation of m6A and m6A(m) in mRNAs and N(1)-methyladenine from tRNAs.</text>
</comment>
<comment type="alternative products">
    <event type="alternative splicing"/>
    <isoform>
        <id>Q8BGW1-1</id>
        <name>1</name>
        <sequence type="displayed"/>
    </isoform>
    <isoform>
        <id>Q8BGW1-2</id>
        <name>2</name>
        <sequence type="described" ref="VSP_025011"/>
    </isoform>
    <isoform>
        <id>Q8BGW1-3</id>
        <name>3</name>
        <sequence type="described" ref="VSP_025009 VSP_025010"/>
    </isoform>
    <isoform>
        <id>Q8BGW1-4</id>
        <name>4</name>
        <sequence type="described" ref="VSP_025007 VSP_025008"/>
    </isoform>
</comment>
<comment type="tissue specificity">
    <text evidence="2 4">Ubiquitous. Detected in brain, brain cortex, hypothalamus, cerebellum, liver, pancreas, heart, kidney, white adipose tissue and skeletal muscle. Most abundant in the brain, particularly in hypothalamic nuclei governing energy balance.</text>
</comment>
<comment type="induction">
    <text evidence="2">Down-regulated in fasting animals.</text>
</comment>
<comment type="domain">
    <text evidence="1">The 3D-structure of the Fe2OG dioxygenase domain is similar to that of the Fe2OG dioxygenase domain found in the bacterial DNA repair dioxygenase alkB and its mammalian orthologs, but sequence similarity is very low. As a consequence, the domain is not detected by protein signature databases.</text>
</comment>
<comment type="disruption phenotype">
    <text evidence="4 7 8 11">Elevated perinatal mortality (PubMed:19234441). Mice have normal body weight at birth, but show growth retardation from day 2 onwards, resulting in a weight reduction of 30-40% after 6 weeks, both in males and females (PubMed:19234441). In addition, animals display reduced nose to anus length (PubMed:19234441). Fat mass is reduced by 60% in males and by 23% in females (PubMed:19234441). Lean body mass is reduced by 26% in males and 19% in females (PubMed:19234441). White adipose tissue decreases more and more over time, while brown adipose tissue is not affected (PubMed:19234441). Serum leptin levels are decreased, while serum levels of adiponectin are increased (PubMed:19234441). Mice exhibit significant hyperphagia after correction for body weight (PubMed:19234441). They show increased oxygen consumption, carbon dioxide production and heat generation, indicating increased energy expenditure, in spite of reduced spontaneous locomotor activity (PubMed:19234441). Plasma adrenaline concentrations are significantly increased (PubMed:19234441). Overall glucose metabolism appears normal (PubMed:19234441). Conditional deletion in the adult affects body composition and metabolism, and causes a small reduction in food intake and weight gain (PubMed:23300482). Mice with conditional deletion in dopaminergic neurons show abnormal dopamine signaling pathways, including impaired dopamine receptor type 2 (D2R) and type 3 (D3R) signaling and the related locomotion function (PubMed:23817550). Deficient mice show increased N(6)-methyladenosine (m6A) in a subset of mRNAs important for neuronal signaling, including many in the dopaminergic signaling pathway (PubMed:23817550). Knockout cells show strongly increased levels of N(6),2'-O-dimethyladenosine cap (m6A(m)) mRNAs (PubMed:28002401).</text>
</comment>
<comment type="similarity">
    <text evidence="16">Belongs to the fto family.</text>
</comment>
<comment type="caution">
    <text evidence="4 5 6 7 8 9 10">Many publications have reported a critical role of Fto in regulating fat mass, adipogenesis and total body weight (PubMed:19234441, PubMed:19680540, PubMed:21076408, PubMed:23300482, PubMed:23817550). However, some reports suggest that some effects are indirect and caused by impaired expression of adjacent genes such as Irx3 and Rpgrip1l (PubMed:24646999, PubMed:24807221).</text>
</comment>
<comment type="sequence caution" evidence="16">
    <conflict type="erroneous initiation">
        <sequence resource="EMBL-CDS" id="BAC98247"/>
    </conflict>
    <text>Extended N-terminus.</text>
</comment>
<keyword id="KW-0007">Acetylation</keyword>
<keyword id="KW-0025">Alternative splicing</keyword>
<keyword id="KW-0963">Cytoplasm</keyword>
<keyword id="KW-0223">Dioxygenase</keyword>
<keyword id="KW-0408">Iron</keyword>
<keyword id="KW-0479">Metal-binding</keyword>
<keyword id="KW-0539">Nucleus</keyword>
<keyword id="KW-0560">Oxidoreductase</keyword>
<keyword id="KW-1185">Reference proteome</keyword>